<name>NU4LM_HIPAM</name>
<comment type="function">
    <text evidence="1">Core subunit of the mitochondrial membrane respiratory chain NADH dehydrogenase (Complex I) which catalyzes electron transfer from NADH through the respiratory chain, using ubiquinone as an electron acceptor. Part of the enzyme membrane arm which is embedded in the lipid bilayer and involved in proton translocation.</text>
</comment>
<comment type="catalytic activity">
    <reaction evidence="1">
        <text>a ubiquinone + NADH + 5 H(+)(in) = a ubiquinol + NAD(+) + 4 H(+)(out)</text>
        <dbReference type="Rhea" id="RHEA:29091"/>
        <dbReference type="Rhea" id="RHEA-COMP:9565"/>
        <dbReference type="Rhea" id="RHEA-COMP:9566"/>
        <dbReference type="ChEBI" id="CHEBI:15378"/>
        <dbReference type="ChEBI" id="CHEBI:16389"/>
        <dbReference type="ChEBI" id="CHEBI:17976"/>
        <dbReference type="ChEBI" id="CHEBI:57540"/>
        <dbReference type="ChEBI" id="CHEBI:57945"/>
        <dbReference type="EC" id="7.1.1.2"/>
    </reaction>
    <physiologicalReaction direction="left-to-right" evidence="1">
        <dbReference type="Rhea" id="RHEA:29092"/>
    </physiologicalReaction>
</comment>
<comment type="subunit">
    <text evidence="2">Core subunit of respiratory chain NADH dehydrogenase (Complex I) which is composed of 45 different subunits.</text>
</comment>
<comment type="subcellular location">
    <subcellularLocation>
        <location evidence="2">Mitochondrion inner membrane</location>
        <topology evidence="3">Multi-pass membrane protein</topology>
    </subcellularLocation>
</comment>
<comment type="similarity">
    <text evidence="4">Belongs to the complex I subunit 4L family.</text>
</comment>
<reference key="1">
    <citation type="journal article" date="1998" name="Proc. R. Soc. B">
        <title>Analyses of mitochondrial genomes strongly support a hippopotamus-whale clade.</title>
        <authorList>
            <person name="Ursing B.M."/>
            <person name="Arnason U."/>
        </authorList>
    </citation>
    <scope>NUCLEOTIDE SEQUENCE [GENOMIC DNA]</scope>
</reference>
<protein>
    <recommendedName>
        <fullName>NADH-ubiquinone oxidoreductase chain 4L</fullName>
        <ecNumber>7.1.1.2</ecNumber>
    </recommendedName>
    <alternativeName>
        <fullName>NADH dehydrogenase subunit 4L</fullName>
    </alternativeName>
</protein>
<gene>
    <name type="primary">MT-ND4L</name>
    <name type="synonym">MTND4L</name>
    <name type="synonym">NADH4L</name>
    <name type="synonym">ND4L</name>
</gene>
<evidence type="ECO:0000250" key="1">
    <source>
        <dbReference type="UniProtKB" id="P03901"/>
    </source>
</evidence>
<evidence type="ECO:0000250" key="2">
    <source>
        <dbReference type="UniProtKB" id="P03902"/>
    </source>
</evidence>
<evidence type="ECO:0000255" key="3"/>
<evidence type="ECO:0000305" key="4"/>
<geneLocation type="mitochondrion"/>
<dbReference type="EC" id="7.1.1.2"/>
<dbReference type="EMBL" id="AJ010957">
    <property type="protein sequence ID" value="CAA09436.1"/>
    <property type="molecule type" value="Genomic_DNA"/>
</dbReference>
<dbReference type="RefSeq" id="NP_008798.1">
    <property type="nucleotide sequence ID" value="NC_000889.1"/>
</dbReference>
<dbReference type="SMR" id="Q9ZZY3"/>
<dbReference type="GeneID" id="808680"/>
<dbReference type="CTD" id="4539"/>
<dbReference type="GO" id="GO:0005743">
    <property type="term" value="C:mitochondrial inner membrane"/>
    <property type="evidence" value="ECO:0000250"/>
    <property type="project" value="UniProtKB"/>
</dbReference>
<dbReference type="GO" id="GO:0045271">
    <property type="term" value="C:respiratory chain complex I"/>
    <property type="evidence" value="ECO:0000250"/>
    <property type="project" value="UniProtKB"/>
</dbReference>
<dbReference type="GO" id="GO:0008137">
    <property type="term" value="F:NADH dehydrogenase (ubiquinone) activity"/>
    <property type="evidence" value="ECO:0000250"/>
    <property type="project" value="UniProtKB"/>
</dbReference>
<dbReference type="GO" id="GO:0042773">
    <property type="term" value="P:ATP synthesis coupled electron transport"/>
    <property type="evidence" value="ECO:0007669"/>
    <property type="project" value="InterPro"/>
</dbReference>
<dbReference type="FunFam" id="1.10.287.3510:FF:000002">
    <property type="entry name" value="NADH-ubiquinone oxidoreductase chain 4L"/>
    <property type="match status" value="1"/>
</dbReference>
<dbReference type="Gene3D" id="1.10.287.3510">
    <property type="match status" value="1"/>
</dbReference>
<dbReference type="InterPro" id="IPR001133">
    <property type="entry name" value="NADH_UbQ_OxRdtase_chain4L/K"/>
</dbReference>
<dbReference type="InterPro" id="IPR039428">
    <property type="entry name" value="NUOK/Mnh_C1-like"/>
</dbReference>
<dbReference type="PANTHER" id="PTHR11434:SF0">
    <property type="entry name" value="NADH-UBIQUINONE OXIDOREDUCTASE CHAIN 4L"/>
    <property type="match status" value="1"/>
</dbReference>
<dbReference type="PANTHER" id="PTHR11434">
    <property type="entry name" value="NADH-UBIQUINONE OXIDOREDUCTASE SUBUNIT ND4L"/>
    <property type="match status" value="1"/>
</dbReference>
<dbReference type="Pfam" id="PF00420">
    <property type="entry name" value="Oxidored_q2"/>
    <property type="match status" value="1"/>
</dbReference>
<sequence length="98" mass="10776">MSLVYMNIIMAFTTSLVGLLMYRSHLMSSLLCLEGMMLSLFIMATLIILNAHFTLASMMPIILLVFAACEAALGLSLLVMVSNTYGTDYVQSLNLLQC</sequence>
<proteinExistence type="inferred from homology"/>
<accession>Q9ZZY3</accession>
<keyword id="KW-0249">Electron transport</keyword>
<keyword id="KW-0472">Membrane</keyword>
<keyword id="KW-0496">Mitochondrion</keyword>
<keyword id="KW-0999">Mitochondrion inner membrane</keyword>
<keyword id="KW-0520">NAD</keyword>
<keyword id="KW-0679">Respiratory chain</keyword>
<keyword id="KW-1278">Translocase</keyword>
<keyword id="KW-0812">Transmembrane</keyword>
<keyword id="KW-1133">Transmembrane helix</keyword>
<keyword id="KW-0813">Transport</keyword>
<keyword id="KW-0830">Ubiquinone</keyword>
<feature type="chain" id="PRO_0000118429" description="NADH-ubiquinone oxidoreductase chain 4L">
    <location>
        <begin position="1"/>
        <end position="98"/>
    </location>
</feature>
<feature type="transmembrane region" description="Helical" evidence="3">
    <location>
        <begin position="1"/>
        <end position="21"/>
    </location>
</feature>
<feature type="transmembrane region" description="Helical" evidence="3">
    <location>
        <begin position="29"/>
        <end position="49"/>
    </location>
</feature>
<feature type="transmembrane region" description="Helical" evidence="3">
    <location>
        <begin position="61"/>
        <end position="81"/>
    </location>
</feature>
<organism>
    <name type="scientific">Hippopotamus amphibius</name>
    <name type="common">Hippopotamus</name>
    <dbReference type="NCBI Taxonomy" id="9833"/>
    <lineage>
        <taxon>Eukaryota</taxon>
        <taxon>Metazoa</taxon>
        <taxon>Chordata</taxon>
        <taxon>Craniata</taxon>
        <taxon>Vertebrata</taxon>
        <taxon>Euteleostomi</taxon>
        <taxon>Mammalia</taxon>
        <taxon>Eutheria</taxon>
        <taxon>Laurasiatheria</taxon>
        <taxon>Artiodactyla</taxon>
        <taxon>Whippomorpha</taxon>
        <taxon>Ancodonta</taxon>
        <taxon>Hippopotamidae</taxon>
        <taxon>Hippopotamus</taxon>
    </lineage>
</organism>